<sequence length="77" mass="9209">MEVKVFRVKGTFERLGKKQPFTKEYRALKEEHVRELVYSDIGSKHRVPRTKIWIESIEEIKPEEAEDPVVRRLSLEL</sequence>
<dbReference type="EMBL" id="AP006878">
    <property type="protein sequence ID" value="BAD85511.1"/>
    <property type="molecule type" value="Genomic_DNA"/>
</dbReference>
<dbReference type="RefSeq" id="WP_011250273.1">
    <property type="nucleotide sequence ID" value="NC_006624.1"/>
</dbReference>
<dbReference type="PDB" id="6SKF">
    <property type="method" value="EM"/>
    <property type="resolution" value="2.95 A"/>
    <property type="chains" value="BT=1-77"/>
</dbReference>
<dbReference type="PDB" id="6SKG">
    <property type="method" value="EM"/>
    <property type="resolution" value="2.65 A"/>
    <property type="chains" value="BT=1-77"/>
</dbReference>
<dbReference type="PDB" id="6TH6">
    <property type="method" value="EM"/>
    <property type="resolution" value="2.55 A"/>
    <property type="chains" value="BT=1-77"/>
</dbReference>
<dbReference type="PDBsum" id="6SKF"/>
<dbReference type="PDBsum" id="6SKG"/>
<dbReference type="PDBsum" id="6TH6"/>
<dbReference type="EMDB" id="EMD-10223"/>
<dbReference type="EMDB" id="EMD-10224"/>
<dbReference type="EMDB" id="EMD-10503"/>
<dbReference type="SMR" id="Q5JGT3"/>
<dbReference type="FunCoup" id="Q5JGT3">
    <property type="interactions" value="60"/>
</dbReference>
<dbReference type="STRING" id="69014.TK1322"/>
<dbReference type="EnsemblBacteria" id="BAD85511">
    <property type="protein sequence ID" value="BAD85511"/>
    <property type="gene ID" value="TK1322"/>
</dbReference>
<dbReference type="GeneID" id="78447842"/>
<dbReference type="KEGG" id="tko:TK1322"/>
<dbReference type="PATRIC" id="fig|69014.16.peg.1294"/>
<dbReference type="eggNOG" id="arCOG04175">
    <property type="taxonomic scope" value="Archaea"/>
</dbReference>
<dbReference type="HOGENOM" id="CLU_177460_0_1_2"/>
<dbReference type="InParanoid" id="Q5JGT3"/>
<dbReference type="OrthoDB" id="191241at2157"/>
<dbReference type="PhylomeDB" id="Q5JGT3"/>
<dbReference type="Proteomes" id="UP000000536">
    <property type="component" value="Chromosome"/>
</dbReference>
<dbReference type="GO" id="GO:1990904">
    <property type="term" value="C:ribonucleoprotein complex"/>
    <property type="evidence" value="ECO:0007669"/>
    <property type="project" value="UniProtKB-KW"/>
</dbReference>
<dbReference type="GO" id="GO:0005840">
    <property type="term" value="C:ribosome"/>
    <property type="evidence" value="ECO:0007669"/>
    <property type="project" value="UniProtKB-KW"/>
</dbReference>
<dbReference type="GO" id="GO:0070180">
    <property type="term" value="F:large ribosomal subunit rRNA binding"/>
    <property type="evidence" value="ECO:0007669"/>
    <property type="project" value="UniProtKB-UniRule"/>
</dbReference>
<dbReference type="GO" id="GO:0003735">
    <property type="term" value="F:structural constituent of ribosome"/>
    <property type="evidence" value="ECO:0007669"/>
    <property type="project" value="InterPro"/>
</dbReference>
<dbReference type="GO" id="GO:0006412">
    <property type="term" value="P:translation"/>
    <property type="evidence" value="ECO:0007669"/>
    <property type="project" value="UniProtKB-UniRule"/>
</dbReference>
<dbReference type="Gene3D" id="3.10.20.10">
    <property type="match status" value="1"/>
</dbReference>
<dbReference type="HAMAP" id="MF_00273">
    <property type="entry name" value="Ribosomal_eL20"/>
    <property type="match status" value="1"/>
</dbReference>
<dbReference type="InterPro" id="IPR028877">
    <property type="entry name" value="Ribosomal_eL20"/>
</dbReference>
<dbReference type="InterPro" id="IPR023573">
    <property type="entry name" value="Ribosomal_eL20_dom"/>
</dbReference>
<dbReference type="NCBIfam" id="NF001981">
    <property type="entry name" value="PRK00773.1-1"/>
    <property type="match status" value="1"/>
</dbReference>
<dbReference type="Pfam" id="PF01775">
    <property type="entry name" value="Ribosomal_L18A"/>
    <property type="match status" value="1"/>
</dbReference>
<dbReference type="SUPFAM" id="SSF160374">
    <property type="entry name" value="RplX-like"/>
    <property type="match status" value="1"/>
</dbReference>
<evidence type="ECO:0000255" key="1">
    <source>
        <dbReference type="HAMAP-Rule" id="MF_00273"/>
    </source>
</evidence>
<evidence type="ECO:0000269" key="2">
    <source>
    </source>
</evidence>
<evidence type="ECO:0000305" key="3"/>
<evidence type="ECO:0007744" key="4">
    <source>
        <dbReference type="PDB" id="6SKF"/>
    </source>
</evidence>
<evidence type="ECO:0007744" key="5">
    <source>
        <dbReference type="PDB" id="6SKG"/>
    </source>
</evidence>
<evidence type="ECO:0007744" key="6">
    <source>
        <dbReference type="PDB" id="6TH6"/>
    </source>
</evidence>
<accession>Q5JGT3</accession>
<keyword id="KW-0002">3D-structure</keyword>
<keyword id="KW-1185">Reference proteome</keyword>
<keyword id="KW-0687">Ribonucleoprotein</keyword>
<keyword id="KW-0689">Ribosomal protein</keyword>
<keyword id="KW-0694">RNA-binding</keyword>
<keyword id="KW-0699">rRNA-binding</keyword>
<protein>
    <recommendedName>
        <fullName evidence="1">Large ribosomal subunit protein eL20</fullName>
    </recommendedName>
    <alternativeName>
        <fullName evidence="3">50S ribosomal protein L18Ae</fullName>
    </alternativeName>
    <alternativeName>
        <fullName evidence="1">50S ribosomal protein L20e</fullName>
    </alternativeName>
    <alternativeName>
        <fullName evidence="1">50S ribosomal protein LX</fullName>
    </alternativeName>
</protein>
<feature type="chain" id="PRO_0000153708" description="Large ribosomal subunit protein eL20">
    <location>
        <begin position="1"/>
        <end position="77"/>
    </location>
</feature>
<proteinExistence type="evidence at protein level"/>
<comment type="subunit">
    <text evidence="1 2">Part of the 50S ribosomal subunit (PubMed:32555463). Binds 23S rRNA.</text>
</comment>
<comment type="similarity">
    <text evidence="1">Belongs to the eukaryotic ribosomal protein eL20 family.</text>
</comment>
<gene>
    <name evidence="1" type="primary">rpl18a</name>
    <name evidence="1" type="synonym">rpl20e</name>
    <name evidence="1" type="synonym">rplX</name>
    <name type="ordered locus">TK1322</name>
</gene>
<reference key="1">
    <citation type="journal article" date="2005" name="Genome Res.">
        <title>Complete genome sequence of the hyperthermophilic archaeon Thermococcus kodakaraensis KOD1 and comparison with Pyrococcus genomes.</title>
        <authorList>
            <person name="Fukui T."/>
            <person name="Atomi H."/>
            <person name="Kanai T."/>
            <person name="Matsumi R."/>
            <person name="Fujiwara S."/>
            <person name="Imanaka T."/>
        </authorList>
    </citation>
    <scope>NUCLEOTIDE SEQUENCE [LARGE SCALE GENOMIC DNA]</scope>
    <source>
        <strain>ATCC BAA-918 / JCM 12380 / KOD1</strain>
    </source>
</reference>
<reference evidence="4 5 6" key="2">
    <citation type="journal article" date="2020" name="Nature">
        <title>Dynamic RNA acetylation revealed by quantitative cross-evolutionary mapping.</title>
        <authorList>
            <person name="Sas-Chen A."/>
            <person name="Thomas J.M."/>
            <person name="Matzov D."/>
            <person name="Taoka M."/>
            <person name="Nance K.D."/>
            <person name="Nir R."/>
            <person name="Bryson K.M."/>
            <person name="Shachar R."/>
            <person name="Liman G.L.S."/>
            <person name="Burkhart B.W."/>
            <person name="Gamage S.T."/>
            <person name="Nobe Y."/>
            <person name="Briney C.A."/>
            <person name="Levy M.J."/>
            <person name="Fuchs R.T."/>
            <person name="Robb G.B."/>
            <person name="Hartmann J."/>
            <person name="Sharma S."/>
            <person name="Lin Q."/>
            <person name="Florens L."/>
            <person name="Washburn M.P."/>
            <person name="Isobe T."/>
            <person name="Santangelo T.J."/>
            <person name="Shalev-Benami M."/>
            <person name="Meier J.L."/>
            <person name="Schwartz S."/>
        </authorList>
    </citation>
    <scope>STRUCTURE BY ELECTRON MICROSCOPY (2.55 ANGSTROMS) IN 70S RIBOSOME</scope>
    <scope>SUBUNIT</scope>
    <source>
        <strain>ATCC BAA-918 / TS559</strain>
    </source>
</reference>
<name>RL18A_THEKO</name>
<organism>
    <name type="scientific">Thermococcus kodakarensis (strain ATCC BAA-918 / JCM 12380 / KOD1)</name>
    <name type="common">Pyrococcus kodakaraensis (strain KOD1)</name>
    <dbReference type="NCBI Taxonomy" id="69014"/>
    <lineage>
        <taxon>Archaea</taxon>
        <taxon>Methanobacteriati</taxon>
        <taxon>Methanobacteriota</taxon>
        <taxon>Thermococci</taxon>
        <taxon>Thermococcales</taxon>
        <taxon>Thermococcaceae</taxon>
        <taxon>Thermococcus</taxon>
    </lineage>
</organism>